<keyword id="KW-0028">Amino-acid biosynthesis</keyword>
<keyword id="KW-0057">Aromatic amino acid biosynthesis</keyword>
<keyword id="KW-0170">Cobalt</keyword>
<keyword id="KW-0963">Cytoplasm</keyword>
<keyword id="KW-0456">Lyase</keyword>
<keyword id="KW-0479">Metal-binding</keyword>
<keyword id="KW-0520">NAD</keyword>
<keyword id="KW-0547">Nucleotide-binding</keyword>
<keyword id="KW-1185">Reference proteome</keyword>
<keyword id="KW-0862">Zinc</keyword>
<reference key="1">
    <citation type="journal article" date="2002" name="Proc. Natl. Acad. Sci. U.S.A.">
        <title>Genome sequence of Streptococcus mutans UA159, a cariogenic dental pathogen.</title>
        <authorList>
            <person name="Ajdic D.J."/>
            <person name="McShan W.M."/>
            <person name="McLaughlin R.E."/>
            <person name="Savic G."/>
            <person name="Chang J."/>
            <person name="Carson M.B."/>
            <person name="Primeaux C."/>
            <person name="Tian R."/>
            <person name="Kenton S."/>
            <person name="Jia H.G."/>
            <person name="Lin S.P."/>
            <person name="Qian Y."/>
            <person name="Li S."/>
            <person name="Zhu H."/>
            <person name="Najar F.Z."/>
            <person name="Lai H."/>
            <person name="White J."/>
            <person name="Roe B.A."/>
            <person name="Ferretti J.J."/>
        </authorList>
    </citation>
    <scope>NUCLEOTIDE SEQUENCE [LARGE SCALE GENOMIC DNA]</scope>
    <source>
        <strain>ATCC 700610 / UA159</strain>
    </source>
</reference>
<protein>
    <recommendedName>
        <fullName evidence="1">3-dehydroquinate synthase</fullName>
        <shortName evidence="1">DHQS</shortName>
        <ecNumber evidence="1">4.2.3.4</ecNumber>
    </recommendedName>
</protein>
<sequence length="355" mass="39060">MKLNVNLPRKPYDIIIEKGSLSKVGQWVKELWQPQKIALITDNRVGSLYAEKVKLGLEDAGFEIVVFDFLEGEASKNLTTVNKAYEFLLKQGMTRSDGIIALGGGVVGDLAGFVASTYMRGIHFLQIPTSLTAQVDSSIGGKTGVNTPLAKNMVGTFTQPDGVLIDPDTLNTLGKRELIEGMGEVIKYGLIADVELWEILKDLDGSTDSILENAEKIIYHSCNVKRQIVVEDELDNGVRLYLNFGHTIGHAIEATAGYGKVMHGEAVAIGMVQISRIAETKGLMLQGITEKIEAMCLKFGLPTDYSPWNVEPMYQALKHDKKTRGQMIKMVVVPQLGQAAINQISLEEMKEYLEK</sequence>
<organism>
    <name type="scientific">Streptococcus mutans serotype c (strain ATCC 700610 / UA159)</name>
    <dbReference type="NCBI Taxonomy" id="210007"/>
    <lineage>
        <taxon>Bacteria</taxon>
        <taxon>Bacillati</taxon>
        <taxon>Bacillota</taxon>
        <taxon>Bacilli</taxon>
        <taxon>Lactobacillales</taxon>
        <taxon>Streptococcaceae</taxon>
        <taxon>Streptococcus</taxon>
    </lineage>
</organism>
<dbReference type="EC" id="4.2.3.4" evidence="1"/>
<dbReference type="EMBL" id="AE014133">
    <property type="protein sequence ID" value="AAN58499.1"/>
    <property type="molecule type" value="Genomic_DNA"/>
</dbReference>
<dbReference type="RefSeq" id="NP_721193.1">
    <property type="nucleotide sequence ID" value="NC_004350.2"/>
</dbReference>
<dbReference type="RefSeq" id="WP_002261933.1">
    <property type="nucleotide sequence ID" value="NC_004350.2"/>
</dbReference>
<dbReference type="SMR" id="Q8DUW2"/>
<dbReference type="STRING" id="210007.SMU_779"/>
<dbReference type="KEGG" id="smu:SMU_779"/>
<dbReference type="PATRIC" id="fig|210007.7.peg.690"/>
<dbReference type="eggNOG" id="COG0337">
    <property type="taxonomic scope" value="Bacteria"/>
</dbReference>
<dbReference type="HOGENOM" id="CLU_001201_0_1_9"/>
<dbReference type="OrthoDB" id="9806583at2"/>
<dbReference type="PhylomeDB" id="Q8DUW2"/>
<dbReference type="UniPathway" id="UPA00053">
    <property type="reaction ID" value="UER00085"/>
</dbReference>
<dbReference type="Proteomes" id="UP000002512">
    <property type="component" value="Chromosome"/>
</dbReference>
<dbReference type="GO" id="GO:0005737">
    <property type="term" value="C:cytoplasm"/>
    <property type="evidence" value="ECO:0007669"/>
    <property type="project" value="UniProtKB-SubCell"/>
</dbReference>
<dbReference type="GO" id="GO:0003856">
    <property type="term" value="F:3-dehydroquinate synthase activity"/>
    <property type="evidence" value="ECO:0007669"/>
    <property type="project" value="UniProtKB-UniRule"/>
</dbReference>
<dbReference type="GO" id="GO:0046872">
    <property type="term" value="F:metal ion binding"/>
    <property type="evidence" value="ECO:0007669"/>
    <property type="project" value="UniProtKB-KW"/>
</dbReference>
<dbReference type="GO" id="GO:0000166">
    <property type="term" value="F:nucleotide binding"/>
    <property type="evidence" value="ECO:0007669"/>
    <property type="project" value="UniProtKB-KW"/>
</dbReference>
<dbReference type="GO" id="GO:0008652">
    <property type="term" value="P:amino acid biosynthetic process"/>
    <property type="evidence" value="ECO:0007669"/>
    <property type="project" value="UniProtKB-KW"/>
</dbReference>
<dbReference type="GO" id="GO:0009073">
    <property type="term" value="P:aromatic amino acid family biosynthetic process"/>
    <property type="evidence" value="ECO:0007669"/>
    <property type="project" value="UniProtKB-KW"/>
</dbReference>
<dbReference type="GO" id="GO:0009423">
    <property type="term" value="P:chorismate biosynthetic process"/>
    <property type="evidence" value="ECO:0007669"/>
    <property type="project" value="UniProtKB-UniRule"/>
</dbReference>
<dbReference type="CDD" id="cd08195">
    <property type="entry name" value="DHQS"/>
    <property type="match status" value="1"/>
</dbReference>
<dbReference type="FunFam" id="3.40.50.1970:FF:000001">
    <property type="entry name" value="3-dehydroquinate synthase"/>
    <property type="match status" value="1"/>
</dbReference>
<dbReference type="Gene3D" id="3.40.50.1970">
    <property type="match status" value="1"/>
</dbReference>
<dbReference type="Gene3D" id="1.20.1090.10">
    <property type="entry name" value="Dehydroquinate synthase-like - alpha domain"/>
    <property type="match status" value="1"/>
</dbReference>
<dbReference type="HAMAP" id="MF_00110">
    <property type="entry name" value="DHQ_synthase"/>
    <property type="match status" value="1"/>
</dbReference>
<dbReference type="InterPro" id="IPR050071">
    <property type="entry name" value="Dehydroquinate_synthase"/>
</dbReference>
<dbReference type="InterPro" id="IPR016037">
    <property type="entry name" value="DHQ_synth_AroB"/>
</dbReference>
<dbReference type="InterPro" id="IPR030963">
    <property type="entry name" value="DHQ_synth_fam"/>
</dbReference>
<dbReference type="InterPro" id="IPR030960">
    <property type="entry name" value="DHQS/DOIS_N"/>
</dbReference>
<dbReference type="InterPro" id="IPR056179">
    <property type="entry name" value="DHQS_C"/>
</dbReference>
<dbReference type="NCBIfam" id="TIGR01357">
    <property type="entry name" value="aroB"/>
    <property type="match status" value="1"/>
</dbReference>
<dbReference type="PANTHER" id="PTHR43622">
    <property type="entry name" value="3-DEHYDROQUINATE SYNTHASE"/>
    <property type="match status" value="1"/>
</dbReference>
<dbReference type="PANTHER" id="PTHR43622:SF7">
    <property type="entry name" value="3-DEHYDROQUINATE SYNTHASE, CHLOROPLASTIC"/>
    <property type="match status" value="1"/>
</dbReference>
<dbReference type="Pfam" id="PF01761">
    <property type="entry name" value="DHQ_synthase"/>
    <property type="match status" value="1"/>
</dbReference>
<dbReference type="Pfam" id="PF24621">
    <property type="entry name" value="DHQS_C"/>
    <property type="match status" value="1"/>
</dbReference>
<dbReference type="PIRSF" id="PIRSF001455">
    <property type="entry name" value="DHQ_synth"/>
    <property type="match status" value="1"/>
</dbReference>
<dbReference type="SUPFAM" id="SSF56796">
    <property type="entry name" value="Dehydroquinate synthase-like"/>
    <property type="match status" value="1"/>
</dbReference>
<proteinExistence type="inferred from homology"/>
<evidence type="ECO:0000255" key="1">
    <source>
        <dbReference type="HAMAP-Rule" id="MF_00110"/>
    </source>
</evidence>
<name>AROB_STRMU</name>
<accession>Q8DUW2</accession>
<comment type="function">
    <text evidence="1">Catalyzes the conversion of 3-deoxy-D-arabino-heptulosonate 7-phosphate (DAHP) to dehydroquinate (DHQ).</text>
</comment>
<comment type="catalytic activity">
    <reaction evidence="1">
        <text>7-phospho-2-dehydro-3-deoxy-D-arabino-heptonate = 3-dehydroquinate + phosphate</text>
        <dbReference type="Rhea" id="RHEA:21968"/>
        <dbReference type="ChEBI" id="CHEBI:32364"/>
        <dbReference type="ChEBI" id="CHEBI:43474"/>
        <dbReference type="ChEBI" id="CHEBI:58394"/>
        <dbReference type="EC" id="4.2.3.4"/>
    </reaction>
</comment>
<comment type="cofactor">
    <cofactor evidence="1">
        <name>NAD(+)</name>
        <dbReference type="ChEBI" id="CHEBI:57540"/>
    </cofactor>
</comment>
<comment type="cofactor">
    <cofactor evidence="1">
        <name>Co(2+)</name>
        <dbReference type="ChEBI" id="CHEBI:48828"/>
    </cofactor>
    <cofactor evidence="1">
        <name>Zn(2+)</name>
        <dbReference type="ChEBI" id="CHEBI:29105"/>
    </cofactor>
    <text evidence="1">Binds 1 divalent metal cation per subunit. Can use either Co(2+) or Zn(2+).</text>
</comment>
<comment type="pathway">
    <text evidence="1">Metabolic intermediate biosynthesis; chorismate biosynthesis; chorismate from D-erythrose 4-phosphate and phosphoenolpyruvate: step 2/7.</text>
</comment>
<comment type="subcellular location">
    <subcellularLocation>
        <location evidence="1">Cytoplasm</location>
    </subcellularLocation>
</comment>
<comment type="similarity">
    <text evidence="1">Belongs to the sugar phosphate cyclases superfamily. Dehydroquinate synthase family.</text>
</comment>
<gene>
    <name evidence="1" type="primary">aroB</name>
    <name type="ordered locus">SMU_779</name>
</gene>
<feature type="chain" id="PRO_0000140791" description="3-dehydroquinate synthase">
    <location>
        <begin position="1"/>
        <end position="355"/>
    </location>
</feature>
<feature type="binding site" evidence="1">
    <location>
        <begin position="71"/>
        <end position="76"/>
    </location>
    <ligand>
        <name>NAD(+)</name>
        <dbReference type="ChEBI" id="CHEBI:57540"/>
    </ligand>
</feature>
<feature type="binding site" evidence="1">
    <location>
        <begin position="105"/>
        <end position="109"/>
    </location>
    <ligand>
        <name>NAD(+)</name>
        <dbReference type="ChEBI" id="CHEBI:57540"/>
    </ligand>
</feature>
<feature type="binding site" evidence="1">
    <location>
        <begin position="129"/>
        <end position="130"/>
    </location>
    <ligand>
        <name>NAD(+)</name>
        <dbReference type="ChEBI" id="CHEBI:57540"/>
    </ligand>
</feature>
<feature type="binding site" evidence="1">
    <location>
        <position position="142"/>
    </location>
    <ligand>
        <name>NAD(+)</name>
        <dbReference type="ChEBI" id="CHEBI:57540"/>
    </ligand>
</feature>
<feature type="binding site" evidence="1">
    <location>
        <position position="151"/>
    </location>
    <ligand>
        <name>NAD(+)</name>
        <dbReference type="ChEBI" id="CHEBI:57540"/>
    </ligand>
</feature>
<feature type="binding site" evidence="1">
    <location>
        <begin position="169"/>
        <end position="172"/>
    </location>
    <ligand>
        <name>NAD(+)</name>
        <dbReference type="ChEBI" id="CHEBI:57540"/>
    </ligand>
</feature>
<feature type="binding site" evidence="1">
    <location>
        <position position="184"/>
    </location>
    <ligand>
        <name>Zn(2+)</name>
        <dbReference type="ChEBI" id="CHEBI:29105"/>
    </ligand>
</feature>
<feature type="binding site" evidence="1">
    <location>
        <position position="246"/>
    </location>
    <ligand>
        <name>Zn(2+)</name>
        <dbReference type="ChEBI" id="CHEBI:29105"/>
    </ligand>
</feature>
<feature type="binding site" evidence="1">
    <location>
        <position position="263"/>
    </location>
    <ligand>
        <name>Zn(2+)</name>
        <dbReference type="ChEBI" id="CHEBI:29105"/>
    </ligand>
</feature>